<comment type="function">
    <text evidence="2">Catalyzes the removal of elemental sulfur atoms from cysteine to produce alanine. Seems to participate in the biosynthesis of the nitrogenase metalloclusters by providing the inorganic sulfur required for the Fe-S core formation.</text>
</comment>
<comment type="catalytic activity">
    <reaction evidence="2">
        <text>(sulfur carrier)-H + L-cysteine = (sulfur carrier)-SH + L-alanine</text>
        <dbReference type="Rhea" id="RHEA:43892"/>
        <dbReference type="Rhea" id="RHEA-COMP:14737"/>
        <dbReference type="Rhea" id="RHEA-COMP:14739"/>
        <dbReference type="ChEBI" id="CHEBI:29917"/>
        <dbReference type="ChEBI" id="CHEBI:35235"/>
        <dbReference type="ChEBI" id="CHEBI:57972"/>
        <dbReference type="ChEBI" id="CHEBI:64428"/>
        <dbReference type="EC" id="2.8.1.7"/>
    </reaction>
</comment>
<comment type="cofactor">
    <cofactor evidence="2">
        <name>pyridoxal 5'-phosphate</name>
        <dbReference type="ChEBI" id="CHEBI:597326"/>
    </cofactor>
</comment>
<comment type="subunit">
    <text evidence="2">Homodimer.</text>
</comment>
<comment type="similarity">
    <text evidence="4">Belongs to the class-V pyridoxal-phosphate-dependent aminotransferase family. NifS/IscS subfamily.</text>
</comment>
<feature type="chain" id="PRO_0000150253" description="Cysteine desulfurase">
    <location>
        <begin position="1"/>
        <end position="393"/>
    </location>
</feature>
<feature type="active site" description="Cysteine persulfide intermediate" evidence="2">
    <location>
        <position position="328"/>
    </location>
</feature>
<feature type="binding site" evidence="3">
    <location>
        <begin position="76"/>
        <end position="77"/>
    </location>
    <ligand>
        <name>pyridoxal 5'-phosphate</name>
        <dbReference type="ChEBI" id="CHEBI:597326"/>
    </ligand>
</feature>
<feature type="binding site" evidence="1">
    <location>
        <position position="155"/>
    </location>
    <ligand>
        <name>pyridoxal 5'-phosphate</name>
        <dbReference type="ChEBI" id="CHEBI:597326"/>
    </ligand>
</feature>
<feature type="binding site" evidence="3">
    <location>
        <position position="183"/>
    </location>
    <ligand>
        <name>pyridoxal 5'-phosphate</name>
        <dbReference type="ChEBI" id="CHEBI:597326"/>
    </ligand>
</feature>
<feature type="binding site" evidence="3">
    <location>
        <begin position="203"/>
        <end position="205"/>
    </location>
    <ligand>
        <name>pyridoxal 5'-phosphate</name>
        <dbReference type="ChEBI" id="CHEBI:597326"/>
    </ligand>
</feature>
<feature type="binding site" evidence="3">
    <location>
        <position position="241"/>
    </location>
    <ligand>
        <name>pyridoxal 5'-phosphate</name>
        <dbReference type="ChEBI" id="CHEBI:597326"/>
    </ligand>
</feature>
<feature type="binding site" description="via persulfide group" evidence="1">
    <location>
        <position position="328"/>
    </location>
    <ligand>
        <name>[2Fe-2S] cluster</name>
        <dbReference type="ChEBI" id="CHEBI:190135"/>
    </ligand>
</feature>
<feature type="modified residue" description="N6-(pyridoxal phosphate)lysine" evidence="3">
    <location>
        <position position="206"/>
    </location>
</feature>
<evidence type="ECO:0000250" key="1">
    <source>
        <dbReference type="UniProtKB" id="O29689"/>
    </source>
</evidence>
<evidence type="ECO:0000250" key="2">
    <source>
        <dbReference type="UniProtKB" id="P05341"/>
    </source>
</evidence>
<evidence type="ECO:0000250" key="3">
    <source>
        <dbReference type="UniProtKB" id="P0A6B9"/>
    </source>
</evidence>
<evidence type="ECO:0000305" key="4"/>
<dbReference type="EC" id="2.8.1.7" evidence="2"/>
<dbReference type="EMBL" id="AH010242">
    <property type="protein sequence ID" value="AAG60742.1"/>
    <property type="molecule type" value="Genomic_DNA"/>
</dbReference>
<dbReference type="EMBL" id="BA000040">
    <property type="protein sequence ID" value="BAC47021.1"/>
    <property type="molecule type" value="Genomic_DNA"/>
</dbReference>
<dbReference type="EMBL" id="X13691">
    <property type="protein sequence ID" value="CAA31982.1"/>
    <property type="molecule type" value="Genomic_DNA"/>
</dbReference>
<dbReference type="PIR" id="S04875">
    <property type="entry name" value="S04875"/>
</dbReference>
<dbReference type="RefSeq" id="NP_768396.1">
    <property type="nucleotide sequence ID" value="NC_004463.1"/>
</dbReference>
<dbReference type="RefSeq" id="WP_011084565.1">
    <property type="nucleotide sequence ID" value="NZ_CP011360.1"/>
</dbReference>
<dbReference type="SMR" id="P37030"/>
<dbReference type="FunCoup" id="P37030">
    <property type="interactions" value="715"/>
</dbReference>
<dbReference type="STRING" id="224911.AAV28_05705"/>
<dbReference type="EnsemblBacteria" id="BAC47021">
    <property type="protein sequence ID" value="BAC47021"/>
    <property type="gene ID" value="BAC47021"/>
</dbReference>
<dbReference type="GeneID" id="92969960"/>
<dbReference type="KEGG" id="bja:blr1756"/>
<dbReference type="PATRIC" id="fig|224911.44.peg.1221"/>
<dbReference type="eggNOG" id="COG1104">
    <property type="taxonomic scope" value="Bacteria"/>
</dbReference>
<dbReference type="HOGENOM" id="CLU_003433_0_0_5"/>
<dbReference type="InParanoid" id="P37030"/>
<dbReference type="OrthoDB" id="9808002at2"/>
<dbReference type="PhylomeDB" id="P37030"/>
<dbReference type="Proteomes" id="UP000002526">
    <property type="component" value="Chromosome"/>
</dbReference>
<dbReference type="GO" id="GO:0031071">
    <property type="term" value="F:cysteine desulfurase activity"/>
    <property type="evidence" value="ECO:0007669"/>
    <property type="project" value="UniProtKB-EC"/>
</dbReference>
<dbReference type="GO" id="GO:0051536">
    <property type="term" value="F:iron-sulfur cluster binding"/>
    <property type="evidence" value="ECO:0007669"/>
    <property type="project" value="UniProtKB-KW"/>
</dbReference>
<dbReference type="GO" id="GO:0046872">
    <property type="term" value="F:metal ion binding"/>
    <property type="evidence" value="ECO:0007669"/>
    <property type="project" value="UniProtKB-KW"/>
</dbReference>
<dbReference type="GO" id="GO:0030170">
    <property type="term" value="F:pyridoxal phosphate binding"/>
    <property type="evidence" value="ECO:0007669"/>
    <property type="project" value="InterPro"/>
</dbReference>
<dbReference type="GO" id="GO:0006520">
    <property type="term" value="P:amino acid metabolic process"/>
    <property type="evidence" value="ECO:0007669"/>
    <property type="project" value="InterPro"/>
</dbReference>
<dbReference type="GO" id="GO:0009399">
    <property type="term" value="P:nitrogen fixation"/>
    <property type="evidence" value="ECO:0007669"/>
    <property type="project" value="UniProtKB-KW"/>
</dbReference>
<dbReference type="FunFam" id="3.40.640.10:FF:000084">
    <property type="entry name" value="IscS-like cysteine desulfurase"/>
    <property type="match status" value="1"/>
</dbReference>
<dbReference type="Gene3D" id="1.10.260.50">
    <property type="match status" value="1"/>
</dbReference>
<dbReference type="Gene3D" id="3.90.1150.10">
    <property type="entry name" value="Aspartate Aminotransferase, domain 1"/>
    <property type="match status" value="1"/>
</dbReference>
<dbReference type="Gene3D" id="3.40.640.10">
    <property type="entry name" value="Type I PLP-dependent aspartate aminotransferase-like (Major domain)"/>
    <property type="match status" value="1"/>
</dbReference>
<dbReference type="InterPro" id="IPR000192">
    <property type="entry name" value="Aminotrans_V_dom"/>
</dbReference>
<dbReference type="InterPro" id="IPR020578">
    <property type="entry name" value="Aminotrans_V_PyrdxlP_BS"/>
</dbReference>
<dbReference type="InterPro" id="IPR017772">
    <property type="entry name" value="Cys_deSase_NifS_bac/arc"/>
</dbReference>
<dbReference type="InterPro" id="IPR016454">
    <property type="entry name" value="Cysteine_dSase"/>
</dbReference>
<dbReference type="InterPro" id="IPR015424">
    <property type="entry name" value="PyrdxlP-dep_Trfase"/>
</dbReference>
<dbReference type="InterPro" id="IPR015421">
    <property type="entry name" value="PyrdxlP-dep_Trfase_major"/>
</dbReference>
<dbReference type="InterPro" id="IPR015422">
    <property type="entry name" value="PyrdxlP-dep_Trfase_small"/>
</dbReference>
<dbReference type="NCBIfam" id="TIGR03402">
    <property type="entry name" value="FeS_nifS"/>
    <property type="match status" value="1"/>
</dbReference>
<dbReference type="PANTHER" id="PTHR11601:SF34">
    <property type="entry name" value="CYSTEINE DESULFURASE"/>
    <property type="match status" value="1"/>
</dbReference>
<dbReference type="PANTHER" id="PTHR11601">
    <property type="entry name" value="CYSTEINE DESULFURYLASE FAMILY MEMBER"/>
    <property type="match status" value="1"/>
</dbReference>
<dbReference type="Pfam" id="PF00266">
    <property type="entry name" value="Aminotran_5"/>
    <property type="match status" value="1"/>
</dbReference>
<dbReference type="PIRSF" id="PIRSF005572">
    <property type="entry name" value="NifS"/>
    <property type="match status" value="1"/>
</dbReference>
<dbReference type="SUPFAM" id="SSF53383">
    <property type="entry name" value="PLP-dependent transferases"/>
    <property type="match status" value="1"/>
</dbReference>
<dbReference type="PROSITE" id="PS00595">
    <property type="entry name" value="AA_TRANSFER_CLASS_5"/>
    <property type="match status" value="1"/>
</dbReference>
<accession>P37030</accession>
<protein>
    <recommendedName>
        <fullName evidence="2">Cysteine desulfurase</fullName>
        <ecNumber evidence="2">2.8.1.7</ecNumber>
    </recommendedName>
    <alternativeName>
        <fullName evidence="2">Nitrogenase metalloclusters biosynthesis protein NifS</fullName>
    </alternativeName>
</protein>
<gene>
    <name evidence="2" type="primary">nifS</name>
    <name type="ordered locus">blr1756</name>
</gene>
<keyword id="KW-0408">Iron</keyword>
<keyword id="KW-0411">Iron-sulfur</keyword>
<keyword id="KW-0479">Metal-binding</keyword>
<keyword id="KW-0535">Nitrogen fixation</keyword>
<keyword id="KW-0663">Pyridoxal phosphate</keyword>
<keyword id="KW-1185">Reference proteome</keyword>
<keyword id="KW-0808">Transferase</keyword>
<reference key="1">
    <citation type="journal article" date="2001" name="J. Bacteriol.">
        <title>Potential symbiosis-specific genes uncovered by sequencing a 410-kb DNA region of the Bradyrhizobium japonicum chromosome.</title>
        <authorList>
            <person name="Goettfert M."/>
            <person name="Roethlisberger S."/>
            <person name="Kuendig C."/>
            <person name="Beck C."/>
            <person name="Marty R."/>
            <person name="Hennecke H."/>
        </authorList>
    </citation>
    <scope>NUCLEOTIDE SEQUENCE [GENOMIC DNA]</scope>
    <source>
        <strain>USDA 110spc4</strain>
    </source>
</reference>
<reference key="2">
    <citation type="journal article" date="2002" name="DNA Res.">
        <title>Complete genomic sequence of nitrogen-fixing symbiotic bacterium Bradyrhizobium japonicum USDA110.</title>
        <authorList>
            <person name="Kaneko T."/>
            <person name="Nakamura Y."/>
            <person name="Sato S."/>
            <person name="Minamisawa K."/>
            <person name="Uchiumi T."/>
            <person name="Sasamoto S."/>
            <person name="Watanabe A."/>
            <person name="Idesawa K."/>
            <person name="Iriguchi M."/>
            <person name="Kawashima K."/>
            <person name="Kohara M."/>
            <person name="Matsumoto M."/>
            <person name="Shimpo S."/>
            <person name="Tsuruoka H."/>
            <person name="Wada T."/>
            <person name="Yamada M."/>
            <person name="Tabata S."/>
        </authorList>
    </citation>
    <scope>NUCLEOTIDE SEQUENCE [LARGE SCALE GENOMIC DNA]</scope>
    <source>
        <strain>JCM 10833 / BCRC 13528 / IAM 13628 / NBRC 14792 / USDA 110</strain>
    </source>
</reference>
<reference key="3">
    <citation type="submission" date="1988-12" db="EMBL/GenBank/DDBJ databases">
        <authorList>
            <person name="Ebeling S."/>
        </authorList>
    </citation>
    <scope>NUCLEOTIDE SEQUENCE [GENOMIC DNA] OF 1-11</scope>
    <source>
        <strain>USDA 110spc4</strain>
    </source>
</reference>
<proteinExistence type="inferred from homology"/>
<organism>
    <name type="scientific">Bradyrhizobium diazoefficiens (strain JCM 10833 / BCRC 13528 / IAM 13628 / NBRC 14792 / USDA 110)</name>
    <dbReference type="NCBI Taxonomy" id="224911"/>
    <lineage>
        <taxon>Bacteria</taxon>
        <taxon>Pseudomonadati</taxon>
        <taxon>Pseudomonadota</taxon>
        <taxon>Alphaproteobacteria</taxon>
        <taxon>Hyphomicrobiales</taxon>
        <taxon>Nitrobacteraceae</taxon>
        <taxon>Bradyrhizobium</taxon>
    </lineage>
</organism>
<name>NIFS_BRADU</name>
<sequence>MSENRAPIYLDNNATTRTDPSVVQTMLPFFTEQFGNASSAHAFGNEAAIAVRQARRSLSGLLGSAYDHEIVFTSGGTEANNAAILSALATQEGRDEVVTTSVEHSAVLALTEQLAARGVKTRIIAVDACGRLDIEAFRCALGPRTAIASVMWANNETGTIFPVKCLAGWTREAGALFHTDAVQAIGKVRLNLKDSTIDMLSLSAHKLHGPKGVGALYLRKGTKFQPLICGGSQERGRRAGTENIPGIVGLGKAAELAAERLEPERIRIGALRDRLEQGILRNGECVVLGDIRNRLANTTNIAFDHLEGEAIAHRLNRAGIAVSLGSACRSGSMQPSHVLRAMQVPAWRMHGAVRFSLSRETSLAEVDEAVCAVSDIVTRMRASSRATVREQTS</sequence>